<sequence>MEDKSLVTLKKKTFEVSKFSNLGAIELFVDGRRKRPKYFHRRRETVLNHVGGKKSEHKLDVFDQRDYKMIKSYAFLKIVGVQLVVTSHLPADTPGFIQIDLLDSRLTEKRKRGKTIQRFKARACDNCSVAQYKVEYSISTQENVLDVWKVGCISEGVPVCDGTYPFSIEVSLIWVATDSTRRLNVEELNSSDYIEGDFTDQEVFGEFMSLKQVEMKTIEAKYDGPYRPATTRPKSLLSSEDVKRASNKKNSS</sequence>
<reference key="1">
    <citation type="submission" date="1999-07" db="EMBL/GenBank/DDBJ databases">
        <title>Complete nucleotide sequence of RNA 1 of tobacco rattle virus isolate PpK20.</title>
        <authorList>
            <person name="Visser P.B."/>
            <person name="Bol J.F."/>
        </authorList>
    </citation>
    <scope>NUCLEOTIDE SEQUENCE [GENOMIC RNA]</scope>
</reference>
<reference key="2">
    <citation type="journal article" date="2002" name="Plant J.">
        <title>Tobacco Rar1, EDS1 and NPR1/NIM1 like genes are required for N-mediated resistance to tobacco mosaic virus.</title>
        <authorList>
            <person name="Liu Y."/>
            <person name="Schiff M."/>
            <person name="Marathe R."/>
            <person name="Dinesh-Kumar S.P."/>
        </authorList>
    </citation>
    <scope>NUCLEOTIDE SEQUENCE [GENOMIC RNA]</scope>
</reference>
<reference key="3">
    <citation type="journal article" date="1991" name="Virology">
        <title>Tobacco rattle virus RNA-1 29K gene product potentiates viral movement and also affects symptom induction in tobacco.</title>
        <authorList>
            <person name="Ziegler-Graff V."/>
            <person name="Guilford P.J."/>
            <person name="Baulcombe D.C."/>
        </authorList>
    </citation>
    <scope>FUNCTION</scope>
</reference>
<proteinExistence type="inferred from homology"/>
<dbReference type="EMBL" id="AF166084">
    <property type="protein sequence ID" value="AAD48028.1"/>
    <property type="molecule type" value="Genomic_RNA"/>
</dbReference>
<dbReference type="EMBL" id="AF406990">
    <property type="protein sequence ID" value="AAM50510.1"/>
    <property type="molecule type" value="Genomic_RNA"/>
</dbReference>
<dbReference type="RefSeq" id="NP_620671.1">
    <property type="nucleotide sequence ID" value="NC_003805.1"/>
</dbReference>
<dbReference type="GeneID" id="962131"/>
<dbReference type="KEGG" id="vg:962131"/>
<dbReference type="Proteomes" id="UP000001669">
    <property type="component" value="Genome"/>
</dbReference>
<dbReference type="GO" id="GO:0003677">
    <property type="term" value="F:DNA binding"/>
    <property type="evidence" value="ECO:0007669"/>
    <property type="project" value="UniProtKB-KW"/>
</dbReference>
<dbReference type="GO" id="GO:0003723">
    <property type="term" value="F:RNA binding"/>
    <property type="evidence" value="ECO:0007669"/>
    <property type="project" value="UniProtKB-KW"/>
</dbReference>
<dbReference type="GO" id="GO:0046740">
    <property type="term" value="P:transport of virus in host, cell to cell"/>
    <property type="evidence" value="ECO:0007669"/>
    <property type="project" value="UniProtKB-KW"/>
</dbReference>
<dbReference type="InterPro" id="IPR028919">
    <property type="entry name" value="Viral_movement"/>
</dbReference>
<dbReference type="Pfam" id="PF01107">
    <property type="entry name" value="MP"/>
    <property type="match status" value="1"/>
</dbReference>
<name>MVP_TRVPP</name>
<organismHost>
    <name type="scientific">Bidens pilosa</name>
    <name type="common">Hairy beggarticks</name>
    <name type="synonym">Cobbler's pegs</name>
    <dbReference type="NCBI Taxonomy" id="42337"/>
</organismHost>
<organismHost>
    <name type="scientific">Capsicum annuum</name>
    <name type="common">Capsicum pepper</name>
    <dbReference type="NCBI Taxonomy" id="4072"/>
</organismHost>
<organismHost>
    <name type="scientific">Cynara cardunculus var. scolymus</name>
    <name type="common">Globe artichoke</name>
    <name type="synonym">Cynara scolymus</name>
    <dbReference type="NCBI Taxonomy" id="59895"/>
</organismHost>
<organismHost>
    <name type="scientific">Solanum lycopersicum</name>
    <name type="common">Tomato</name>
    <name type="synonym">Lycopersicon esculentum</name>
    <dbReference type="NCBI Taxonomy" id="4081"/>
</organismHost>
<feature type="chain" id="PRO_0000409289" description="Movement protein">
    <location>
        <begin position="1"/>
        <end position="252"/>
    </location>
</feature>
<feature type="region of interest" description="Disordered" evidence="1">
    <location>
        <begin position="222"/>
        <end position="252"/>
    </location>
</feature>
<protein>
    <recommendedName>
        <fullName>Movement protein</fullName>
    </recommendedName>
    <alternativeName>
        <fullName>29 kDa protein</fullName>
    </alternativeName>
    <alternativeName>
        <fullName>Cell-to-cell transport protein</fullName>
    </alternativeName>
    <alternativeName>
        <fullName>P1a</fullName>
    </alternativeName>
</protein>
<accession>Q9QPN4</accession>
<organism>
    <name type="scientific">Tobacco rattle virus (isolate PpK20)</name>
    <name type="common">TRV</name>
    <dbReference type="NCBI Taxonomy" id="652939"/>
    <lineage>
        <taxon>Viruses</taxon>
        <taxon>Riboviria</taxon>
        <taxon>Orthornavirae</taxon>
        <taxon>Kitrinoviricota</taxon>
        <taxon>Alsuviricetes</taxon>
        <taxon>Martellivirales</taxon>
        <taxon>Virgaviridae</taxon>
        <taxon>Tobravirus</taxon>
        <taxon>Tobacco rattle virus</taxon>
    </lineage>
</organism>
<evidence type="ECO:0000256" key="1">
    <source>
        <dbReference type="SAM" id="MobiDB-lite"/>
    </source>
</evidence>
<evidence type="ECO:0000269" key="2">
    <source>
    </source>
</evidence>
<evidence type="ECO:0000305" key="3"/>
<keyword id="KW-0238">DNA-binding</keyword>
<keyword id="KW-1185">Reference proteome</keyword>
<keyword id="KW-0694">RNA-binding</keyword>
<keyword id="KW-0813">Transport</keyword>
<keyword id="KW-0916">Viral movement protein</keyword>
<comment type="function">
    <text evidence="2">Transports viral genome to neighboring plant cells directly through plasmosdesmata, without any budding. The movement protein allows efficient cell to cell propagation, by bypassing the host cell wall barrier. Displays RNA-binding activity.</text>
</comment>
<comment type="similarity">
    <text evidence="3">Belongs to the tobamovirus movement protein family.</text>
</comment>